<feature type="chain" id="PRO_1000088803" description="Aspartate carbamoyltransferase catalytic subunit">
    <location>
        <begin position="1"/>
        <end position="311"/>
    </location>
</feature>
<feature type="binding site" evidence="1">
    <location>
        <position position="59"/>
    </location>
    <ligand>
        <name>carbamoyl phosphate</name>
        <dbReference type="ChEBI" id="CHEBI:58228"/>
    </ligand>
</feature>
<feature type="binding site" evidence="1">
    <location>
        <position position="60"/>
    </location>
    <ligand>
        <name>carbamoyl phosphate</name>
        <dbReference type="ChEBI" id="CHEBI:58228"/>
    </ligand>
</feature>
<feature type="binding site" evidence="1">
    <location>
        <position position="87"/>
    </location>
    <ligand>
        <name>L-aspartate</name>
        <dbReference type="ChEBI" id="CHEBI:29991"/>
    </ligand>
</feature>
<feature type="binding site" evidence="1">
    <location>
        <position position="109"/>
    </location>
    <ligand>
        <name>carbamoyl phosphate</name>
        <dbReference type="ChEBI" id="CHEBI:58228"/>
    </ligand>
</feature>
<feature type="binding site" evidence="1">
    <location>
        <position position="139"/>
    </location>
    <ligand>
        <name>carbamoyl phosphate</name>
        <dbReference type="ChEBI" id="CHEBI:58228"/>
    </ligand>
</feature>
<feature type="binding site" evidence="1">
    <location>
        <position position="142"/>
    </location>
    <ligand>
        <name>carbamoyl phosphate</name>
        <dbReference type="ChEBI" id="CHEBI:58228"/>
    </ligand>
</feature>
<feature type="binding site" evidence="1">
    <location>
        <position position="172"/>
    </location>
    <ligand>
        <name>L-aspartate</name>
        <dbReference type="ChEBI" id="CHEBI:29991"/>
    </ligand>
</feature>
<feature type="binding site" evidence="1">
    <location>
        <position position="224"/>
    </location>
    <ligand>
        <name>L-aspartate</name>
        <dbReference type="ChEBI" id="CHEBI:29991"/>
    </ligand>
</feature>
<feature type="binding site" evidence="1">
    <location>
        <position position="265"/>
    </location>
    <ligand>
        <name>carbamoyl phosphate</name>
        <dbReference type="ChEBI" id="CHEBI:58228"/>
    </ligand>
</feature>
<feature type="binding site" evidence="1">
    <location>
        <position position="266"/>
    </location>
    <ligand>
        <name>carbamoyl phosphate</name>
        <dbReference type="ChEBI" id="CHEBI:58228"/>
    </ligand>
</feature>
<accession>B4U3B0</accession>
<proteinExistence type="inferred from homology"/>
<protein>
    <recommendedName>
        <fullName evidence="1">Aspartate carbamoyltransferase catalytic subunit</fullName>
        <ecNumber evidence="1">2.1.3.2</ecNumber>
    </recommendedName>
    <alternativeName>
        <fullName evidence="1">Aspartate transcarbamylase</fullName>
        <shortName evidence="1">ATCase</shortName>
    </alternativeName>
</protein>
<gene>
    <name evidence="1" type="primary">pyrB</name>
    <name type="ordered locus">Sez_1125</name>
</gene>
<organism>
    <name type="scientific">Streptococcus equi subsp. zooepidemicus (strain MGCS10565)</name>
    <dbReference type="NCBI Taxonomy" id="552526"/>
    <lineage>
        <taxon>Bacteria</taxon>
        <taxon>Bacillati</taxon>
        <taxon>Bacillota</taxon>
        <taxon>Bacilli</taxon>
        <taxon>Lactobacillales</taxon>
        <taxon>Streptococcaceae</taxon>
        <taxon>Streptococcus</taxon>
    </lineage>
</organism>
<name>PYRB_STREM</name>
<keyword id="KW-0665">Pyrimidine biosynthesis</keyword>
<keyword id="KW-0808">Transferase</keyword>
<comment type="function">
    <text evidence="1">Catalyzes the condensation of carbamoyl phosphate and aspartate to form carbamoyl aspartate and inorganic phosphate, the committed step in the de novo pyrimidine nucleotide biosynthesis pathway.</text>
</comment>
<comment type="catalytic activity">
    <reaction evidence="1">
        <text>carbamoyl phosphate + L-aspartate = N-carbamoyl-L-aspartate + phosphate + H(+)</text>
        <dbReference type="Rhea" id="RHEA:20013"/>
        <dbReference type="ChEBI" id="CHEBI:15378"/>
        <dbReference type="ChEBI" id="CHEBI:29991"/>
        <dbReference type="ChEBI" id="CHEBI:32814"/>
        <dbReference type="ChEBI" id="CHEBI:43474"/>
        <dbReference type="ChEBI" id="CHEBI:58228"/>
        <dbReference type="EC" id="2.1.3.2"/>
    </reaction>
</comment>
<comment type="pathway">
    <text evidence="1">Pyrimidine metabolism; UMP biosynthesis via de novo pathway; (S)-dihydroorotate from bicarbonate: step 2/3.</text>
</comment>
<comment type="subunit">
    <text evidence="1">Heterododecamer (2C3:3R2) of six catalytic PyrB chains organized as two trimers (C3), and six regulatory PyrI chains organized as three dimers (R2).</text>
</comment>
<comment type="similarity">
    <text evidence="1">Belongs to the aspartate/ornithine carbamoyltransferase superfamily. ATCase family.</text>
</comment>
<reference key="1">
    <citation type="journal article" date="2008" name="PLoS ONE">
        <title>Genome sequence of a lancefield group C Streptococcus zooepidemicus strain causing epidemic nephritis: new information about an old disease.</title>
        <authorList>
            <person name="Beres S.B."/>
            <person name="Sesso R."/>
            <person name="Pinto S.W.L."/>
            <person name="Hoe N.P."/>
            <person name="Porcella S.F."/>
            <person name="Deleo F.R."/>
            <person name="Musser J.M."/>
        </authorList>
    </citation>
    <scope>NUCLEOTIDE SEQUENCE [LARGE SCALE GENOMIC DNA]</scope>
    <source>
        <strain>MGCS10565</strain>
    </source>
</reference>
<dbReference type="EC" id="2.1.3.2" evidence="1"/>
<dbReference type="EMBL" id="CP001129">
    <property type="protein sequence ID" value="ACG62477.1"/>
    <property type="molecule type" value="Genomic_DNA"/>
</dbReference>
<dbReference type="RefSeq" id="WP_012515742.1">
    <property type="nucleotide sequence ID" value="NC_011134.1"/>
</dbReference>
<dbReference type="SMR" id="B4U3B0"/>
<dbReference type="KEGG" id="sez:Sez_1125"/>
<dbReference type="HOGENOM" id="CLU_043846_2_1_9"/>
<dbReference type="UniPathway" id="UPA00070">
    <property type="reaction ID" value="UER00116"/>
</dbReference>
<dbReference type="Proteomes" id="UP000001873">
    <property type="component" value="Chromosome"/>
</dbReference>
<dbReference type="GO" id="GO:0005829">
    <property type="term" value="C:cytosol"/>
    <property type="evidence" value="ECO:0007669"/>
    <property type="project" value="TreeGrafter"/>
</dbReference>
<dbReference type="GO" id="GO:0016597">
    <property type="term" value="F:amino acid binding"/>
    <property type="evidence" value="ECO:0007669"/>
    <property type="project" value="InterPro"/>
</dbReference>
<dbReference type="GO" id="GO:0004070">
    <property type="term" value="F:aspartate carbamoyltransferase activity"/>
    <property type="evidence" value="ECO:0007669"/>
    <property type="project" value="UniProtKB-UniRule"/>
</dbReference>
<dbReference type="GO" id="GO:0006207">
    <property type="term" value="P:'de novo' pyrimidine nucleobase biosynthetic process"/>
    <property type="evidence" value="ECO:0007669"/>
    <property type="project" value="InterPro"/>
</dbReference>
<dbReference type="GO" id="GO:0044205">
    <property type="term" value="P:'de novo' UMP biosynthetic process"/>
    <property type="evidence" value="ECO:0007669"/>
    <property type="project" value="UniProtKB-UniRule"/>
</dbReference>
<dbReference type="GO" id="GO:0006520">
    <property type="term" value="P:amino acid metabolic process"/>
    <property type="evidence" value="ECO:0007669"/>
    <property type="project" value="InterPro"/>
</dbReference>
<dbReference type="FunFam" id="3.40.50.1370:FF:000011">
    <property type="entry name" value="Aspartate carbamoyltransferase"/>
    <property type="match status" value="1"/>
</dbReference>
<dbReference type="Gene3D" id="3.40.50.1370">
    <property type="entry name" value="Aspartate/ornithine carbamoyltransferase"/>
    <property type="match status" value="2"/>
</dbReference>
<dbReference type="HAMAP" id="MF_00001">
    <property type="entry name" value="Asp_carb_tr"/>
    <property type="match status" value="1"/>
</dbReference>
<dbReference type="InterPro" id="IPR006132">
    <property type="entry name" value="Asp/Orn_carbamoyltranf_P-bd"/>
</dbReference>
<dbReference type="InterPro" id="IPR006130">
    <property type="entry name" value="Asp/Orn_carbamoylTrfase"/>
</dbReference>
<dbReference type="InterPro" id="IPR036901">
    <property type="entry name" value="Asp/Orn_carbamoylTrfase_sf"/>
</dbReference>
<dbReference type="InterPro" id="IPR002082">
    <property type="entry name" value="Asp_carbamoyltransf"/>
</dbReference>
<dbReference type="InterPro" id="IPR006131">
    <property type="entry name" value="Asp_carbamoyltransf_Asp/Orn-bd"/>
</dbReference>
<dbReference type="NCBIfam" id="TIGR00670">
    <property type="entry name" value="asp_carb_tr"/>
    <property type="match status" value="1"/>
</dbReference>
<dbReference type="NCBIfam" id="NF002032">
    <property type="entry name" value="PRK00856.1"/>
    <property type="match status" value="1"/>
</dbReference>
<dbReference type="PANTHER" id="PTHR45753:SF6">
    <property type="entry name" value="ASPARTATE CARBAMOYLTRANSFERASE"/>
    <property type="match status" value="1"/>
</dbReference>
<dbReference type="PANTHER" id="PTHR45753">
    <property type="entry name" value="ORNITHINE CARBAMOYLTRANSFERASE, MITOCHONDRIAL"/>
    <property type="match status" value="1"/>
</dbReference>
<dbReference type="Pfam" id="PF00185">
    <property type="entry name" value="OTCace"/>
    <property type="match status" value="1"/>
</dbReference>
<dbReference type="Pfam" id="PF02729">
    <property type="entry name" value="OTCace_N"/>
    <property type="match status" value="1"/>
</dbReference>
<dbReference type="PRINTS" id="PR00100">
    <property type="entry name" value="AOTCASE"/>
</dbReference>
<dbReference type="PRINTS" id="PR00101">
    <property type="entry name" value="ATCASE"/>
</dbReference>
<dbReference type="SUPFAM" id="SSF53671">
    <property type="entry name" value="Aspartate/ornithine carbamoyltransferase"/>
    <property type="match status" value="1"/>
</dbReference>
<dbReference type="PROSITE" id="PS00097">
    <property type="entry name" value="CARBAMOYLTRANSFERASE"/>
    <property type="match status" value="1"/>
</dbReference>
<sequence>MSVVNNRVALKHLVSMEHLTNEEVMGLISRGSEYKAGKVAIKDNSRHFAANLFFENSTRTHKSFEVAENKLGLRVLDFNADTSAVNKGETLYDTVLTMSALGTEICVIRHPEDDYYQQLIDSPTITASIVNGGDGSGQHPSQCLLDLLTIYEEFGHFDGLKIAIAGDLTHSRVAKSNMQILKRLGAELYFYGPEQWYSSEFDSYGRYMAIDHIIDQLDVLMLLRVQHERHDGSQSFSKEDYHRQFGLTEERYRRLKDSAIIMHPAPVNRDVEIADHLVEAPKARIVAQMANGVFVRMAIIEAILNGRNENV</sequence>
<evidence type="ECO:0000255" key="1">
    <source>
        <dbReference type="HAMAP-Rule" id="MF_00001"/>
    </source>
</evidence>